<keyword id="KW-0175">Coiled coil</keyword>
<keyword id="KW-0574">Periplasm</keyword>
<keyword id="KW-0732">Signal</keyword>
<evidence type="ECO:0000255" key="1">
    <source>
        <dbReference type="HAMAP-Rule" id="MF_01304"/>
    </source>
</evidence>
<comment type="subcellular location">
    <subcellularLocation>
        <location evidence="1">Periplasm</location>
    </subcellularLocation>
</comment>
<comment type="similarity">
    <text evidence="1">Belongs to the UPF0194 family.</text>
</comment>
<organism>
    <name type="scientific">Salmonella paratyphi C (strain RKS4594)</name>
    <dbReference type="NCBI Taxonomy" id="476213"/>
    <lineage>
        <taxon>Bacteria</taxon>
        <taxon>Pseudomonadati</taxon>
        <taxon>Pseudomonadota</taxon>
        <taxon>Gammaproteobacteria</taxon>
        <taxon>Enterobacterales</taxon>
        <taxon>Enterobacteriaceae</taxon>
        <taxon>Salmonella</taxon>
    </lineage>
</organism>
<proteinExistence type="inferred from homology"/>
<protein>
    <recommendedName>
        <fullName evidence="1">UPF0194 membrane protein YbhG</fullName>
    </recommendedName>
</protein>
<accession>C0PX06</accession>
<reference key="1">
    <citation type="journal article" date="2009" name="PLoS ONE">
        <title>Salmonella paratyphi C: genetic divergence from Salmonella choleraesuis and pathogenic convergence with Salmonella typhi.</title>
        <authorList>
            <person name="Liu W.-Q."/>
            <person name="Feng Y."/>
            <person name="Wang Y."/>
            <person name="Zou Q.-H."/>
            <person name="Chen F."/>
            <person name="Guo J.-T."/>
            <person name="Peng Y.-H."/>
            <person name="Jin Y."/>
            <person name="Li Y.-G."/>
            <person name="Hu S.-N."/>
            <person name="Johnston R.N."/>
            <person name="Liu G.-R."/>
            <person name="Liu S.-L."/>
        </authorList>
    </citation>
    <scope>NUCLEOTIDE SEQUENCE [LARGE SCALE GENOMIC DNA]</scope>
    <source>
        <strain>RKS4594</strain>
    </source>
</reference>
<gene>
    <name evidence="1" type="primary">ybhG</name>
    <name type="ordered locus">SPC_0815</name>
</gene>
<name>YBHG_SALPC</name>
<sequence>MKKPVVIGLAIAAIVAVIAGGTWWYQSRQDDGLTLYGNVDIRTVNISFRVGGRLASLNVDEGDTIKAGQVLGELDHAPYENALMQAKAGVSVAQAQYDLMLAGYRDEEIAQAAAAVRQAQAAYDYAQNFYNRQQGLWKSRTISANDLENARSSRDQAQATLKSAQDKLSQYRTGNREQDIAQAKASLEQAKAQLAQAQLDLQDTTLIAPANGTLLTRAVEPGSMLNAGSTVLTLSLTRPVWVRAYVDERNLSQTQPGRDILLYTDGRPDKPYHGKIGFVSPTAEFTPKTVETPDLRTDLVYRLRIIVTDADDALRQGMPVTVKFNDEARHE</sequence>
<feature type="signal peptide" evidence="1">
    <location>
        <begin position="1"/>
        <end position="19"/>
    </location>
</feature>
<feature type="chain" id="PRO_1000165369" description="UPF0194 membrane protein YbhG">
    <location>
        <begin position="20"/>
        <end position="331"/>
    </location>
</feature>
<feature type="coiled-coil region" evidence="1">
    <location>
        <begin position="107"/>
        <end position="208"/>
    </location>
</feature>
<dbReference type="EMBL" id="CP000857">
    <property type="protein sequence ID" value="ACN44988.1"/>
    <property type="molecule type" value="Genomic_DNA"/>
</dbReference>
<dbReference type="SMR" id="C0PX06"/>
<dbReference type="KEGG" id="sei:SPC_0815"/>
<dbReference type="HOGENOM" id="CLU_018816_6_3_6"/>
<dbReference type="Proteomes" id="UP000001599">
    <property type="component" value="Chromosome"/>
</dbReference>
<dbReference type="GO" id="GO:0042597">
    <property type="term" value="C:periplasmic space"/>
    <property type="evidence" value="ECO:0007669"/>
    <property type="project" value="UniProtKB-SubCell"/>
</dbReference>
<dbReference type="FunFam" id="1.10.287.470:FF:000004">
    <property type="entry name" value="UPF0194 membrane protein YbhG"/>
    <property type="match status" value="1"/>
</dbReference>
<dbReference type="FunFam" id="2.40.50.100:FF:000025">
    <property type="entry name" value="UPF0194 membrane protein YbhG"/>
    <property type="match status" value="1"/>
</dbReference>
<dbReference type="Gene3D" id="2.40.30.170">
    <property type="match status" value="1"/>
</dbReference>
<dbReference type="Gene3D" id="2.40.50.100">
    <property type="match status" value="2"/>
</dbReference>
<dbReference type="Gene3D" id="1.10.287.470">
    <property type="entry name" value="Helix hairpin bin"/>
    <property type="match status" value="1"/>
</dbReference>
<dbReference type="HAMAP" id="MF_01304">
    <property type="entry name" value="UPF0194"/>
    <property type="match status" value="1"/>
</dbReference>
<dbReference type="InterPro" id="IPR032317">
    <property type="entry name" value="CusB_D23"/>
</dbReference>
<dbReference type="InterPro" id="IPR022936">
    <property type="entry name" value="UPF0194_membrane_YbhG"/>
</dbReference>
<dbReference type="InterPro" id="IPR050465">
    <property type="entry name" value="UPF0194_transport"/>
</dbReference>
<dbReference type="NCBIfam" id="NF002939">
    <property type="entry name" value="PRK03598.1"/>
    <property type="match status" value="1"/>
</dbReference>
<dbReference type="PANTHER" id="PTHR32347">
    <property type="entry name" value="EFFLUX SYSTEM COMPONENT YKNX-RELATED"/>
    <property type="match status" value="1"/>
</dbReference>
<dbReference type="PANTHER" id="PTHR32347:SF29">
    <property type="entry name" value="UPF0194 MEMBRANE PROTEIN YBHG"/>
    <property type="match status" value="1"/>
</dbReference>
<dbReference type="Pfam" id="PF16576">
    <property type="entry name" value="HlyD_D23"/>
    <property type="match status" value="1"/>
</dbReference>
<dbReference type="SUPFAM" id="SSF111369">
    <property type="entry name" value="HlyD-like secretion proteins"/>
    <property type="match status" value="3"/>
</dbReference>